<reference key="1">
    <citation type="journal article" date="2004" name="Genome Res.">
        <title>Genome sequence of Haloarcula marismortui: a halophilic archaeon from the Dead Sea.</title>
        <authorList>
            <person name="Baliga N.S."/>
            <person name="Bonneau R."/>
            <person name="Facciotti M.T."/>
            <person name="Pan M."/>
            <person name="Glusman G."/>
            <person name="Deutsch E.W."/>
            <person name="Shannon P."/>
            <person name="Chiu Y."/>
            <person name="Weng R.S."/>
            <person name="Gan R.R."/>
            <person name="Hung P."/>
            <person name="Date S.V."/>
            <person name="Marcotte E."/>
            <person name="Hood L."/>
            <person name="Ng W.V."/>
        </authorList>
    </citation>
    <scope>NUCLEOTIDE SEQUENCE [LARGE SCALE GENOMIC DNA]</scope>
    <source>
        <strain>ATCC 43049 / DSM 3752 / JCM 8966 / VKM B-1809</strain>
    </source>
</reference>
<protein>
    <recommendedName>
        <fullName evidence="1">UPF0179 protein rrnAC1064</fullName>
    </recommendedName>
</protein>
<name>Y1064_HALMA</name>
<organism>
    <name type="scientific">Haloarcula marismortui (strain ATCC 43049 / DSM 3752 / JCM 8966 / VKM B-1809)</name>
    <name type="common">Halobacterium marismortui</name>
    <dbReference type="NCBI Taxonomy" id="272569"/>
    <lineage>
        <taxon>Archaea</taxon>
        <taxon>Methanobacteriati</taxon>
        <taxon>Methanobacteriota</taxon>
        <taxon>Stenosarchaea group</taxon>
        <taxon>Halobacteria</taxon>
        <taxon>Halobacteriales</taxon>
        <taxon>Haloarculaceae</taxon>
        <taxon>Haloarcula</taxon>
    </lineage>
</organism>
<dbReference type="EMBL" id="AY596297">
    <property type="protein sequence ID" value="AAV46027.1"/>
    <property type="molecule type" value="Genomic_DNA"/>
</dbReference>
<dbReference type="RefSeq" id="WP_011223423.1">
    <property type="nucleotide sequence ID" value="NC_006396.1"/>
</dbReference>
<dbReference type="STRING" id="272569.rrnAC1064"/>
<dbReference type="PaxDb" id="272569-rrnAC1064"/>
<dbReference type="EnsemblBacteria" id="AAV46027">
    <property type="protein sequence ID" value="AAV46027"/>
    <property type="gene ID" value="rrnAC1064"/>
</dbReference>
<dbReference type="GeneID" id="40152073"/>
<dbReference type="KEGG" id="hma:rrnAC1064"/>
<dbReference type="PATRIC" id="fig|272569.17.peg.1792"/>
<dbReference type="eggNOG" id="arCOG04477">
    <property type="taxonomic scope" value="Archaea"/>
</dbReference>
<dbReference type="HOGENOM" id="CLU_121764_0_0_2"/>
<dbReference type="Proteomes" id="UP000001169">
    <property type="component" value="Chromosome I"/>
</dbReference>
<dbReference type="HAMAP" id="MF_00498">
    <property type="entry name" value="UPF0179"/>
    <property type="match status" value="1"/>
</dbReference>
<dbReference type="InterPro" id="IPR005369">
    <property type="entry name" value="UPF0179"/>
</dbReference>
<dbReference type="PANTHER" id="PTHR40699">
    <property type="entry name" value="UPF0179 PROTEIN MJ1627"/>
    <property type="match status" value="1"/>
</dbReference>
<dbReference type="PANTHER" id="PTHR40699:SF1">
    <property type="entry name" value="UPF0179 PROTEIN MJ1627"/>
    <property type="match status" value="1"/>
</dbReference>
<dbReference type="Pfam" id="PF03684">
    <property type="entry name" value="UPF0179"/>
    <property type="match status" value="1"/>
</dbReference>
<dbReference type="PIRSF" id="PIRSF006595">
    <property type="entry name" value="UCP006595"/>
    <property type="match status" value="1"/>
</dbReference>
<accession>Q5V375</accession>
<proteinExistence type="inferred from homology"/>
<keyword id="KW-1185">Reference proteome</keyword>
<feature type="chain" id="PRO_0000378112" description="UPF0179 protein rrnAC1064">
    <location>
        <begin position="1"/>
        <end position="149"/>
    </location>
</feature>
<gene>
    <name type="ordered locus">rrnAC1064</name>
</gene>
<sequence>MTTVTLVGTRLAEVGAEFVYRGEASGCEGCPYRDQCLNLTTGNRYRITNVRQSGQTLDCAVHENGVRAVEVEPAPIQANVPSKGAYAGSKASLPGPCPHTECPSHPYCEPAGAEFDEEYRISEIVGDPPHDYCMLDRDLTLVELEAPGE</sequence>
<evidence type="ECO:0000255" key="1">
    <source>
        <dbReference type="HAMAP-Rule" id="MF_00498"/>
    </source>
</evidence>
<comment type="similarity">
    <text evidence="1">Belongs to the UPF0179 family.</text>
</comment>